<comment type="function">
    <text evidence="1 3 4">Innate immunity protein that plays several important functions in antimicrobial and antitumor defense systems. Acts as a pattern receptor that binds to murein peptidoglycans (PGN) of Gram-positive bacteria and thus provides bactericidal activity (PubMed:11880375, PubMed:16394004). Forms an equimolar complex with heat shock protein HSPA1A and induces programmed cell death through apoptosis and necroptosis in tumor cell lines by activating the TNFR1 receptor on the target cell membrane. In addition, acts in complex with the Ca(2+)-binding protein S100A4 as a chemoattractant able to induce lymphocyte movement. Mechanistically, this complex acts as a ligand of the chemotactic receptors CCR5 and CXCR3 which are present on the cells of the immune system. Also promotes the activation of lymphocytes that become able to kill virus-infected cells as well as tumor cells by modulating the spectrum of their target-cell specificity. Induction of cytotoxicity on monocyte surface requires interaction with TREM1 receptor (By similarity).</text>
</comment>
<comment type="subunit">
    <text>Homodimer; disulfide-linked.</text>
</comment>
<comment type="subcellular location">
    <subcellularLocation>
        <location evidence="4">Secreted</location>
    </subcellularLocation>
    <subcellularLocation>
        <location evidence="4">Cytoplasmic granule</location>
    </subcellularLocation>
</comment>
<comment type="tissue specificity">
    <text evidence="3">Synthesized only in bone marrow. The mature protein is stored in the cytoplasmic granules of eosinophils and neutrophils but is absent from monocytes, lymphocytes, or platelets.</text>
</comment>
<comment type="similarity">
    <text evidence="5">Belongs to the N-acetylmuramoyl-L-alanine amidase 2 family.</text>
</comment>
<feature type="signal peptide">
    <location>
        <begin position="1"/>
        <end position="21"/>
    </location>
</feature>
<feature type="chain" id="PRO_0000023899" description="Peptidoglycan recognition protein 1">
    <location>
        <begin position="22"/>
        <end position="190"/>
    </location>
</feature>
<feature type="domain" description="N-acetylmuramoyl-L-alanine amidase" evidence="2">
    <location>
        <begin position="46"/>
        <end position="174"/>
    </location>
</feature>
<feature type="modified residue" description="Pyrrolidone carboxylic acid" evidence="3">
    <location>
        <position position="22"/>
    </location>
</feature>
<feature type="disulfide bond">
    <location>
        <begin position="24"/>
        <end position="148"/>
    </location>
</feature>
<feature type="disulfide bond">
    <location>
        <begin position="40"/>
        <end position="85"/>
    </location>
</feature>
<feature type="disulfide bond">
    <location>
        <begin position="61"/>
        <end position="67"/>
    </location>
</feature>
<feature type="sequence variant" description="In strain: Isolate JEW38.">
    <original>W</original>
    <variation>G</variation>
    <location>
        <position position="184"/>
    </location>
</feature>
<name>PGRP1_BOVIN</name>
<dbReference type="EMBL" id="AY083309">
    <property type="protein sequence ID" value="AAL87002.1"/>
    <property type="molecule type" value="mRNA"/>
</dbReference>
<dbReference type="EMBL" id="EU746450">
    <property type="protein sequence ID" value="ACH92779.1"/>
    <property type="molecule type" value="Genomic_DNA"/>
</dbReference>
<dbReference type="EMBL" id="EU746451">
    <property type="protein sequence ID" value="ACH92780.1"/>
    <property type="molecule type" value="Genomic_DNA"/>
</dbReference>
<dbReference type="EMBL" id="EU746452">
    <property type="protein sequence ID" value="ACH92781.1"/>
    <property type="molecule type" value="Genomic_DNA"/>
</dbReference>
<dbReference type="EMBL" id="EU746455">
    <property type="protein sequence ID" value="ACH92784.1"/>
    <property type="molecule type" value="Genomic_DNA"/>
</dbReference>
<dbReference type="EMBL" id="BC142042">
    <property type="protein sequence ID" value="AAI42043.1"/>
    <property type="molecule type" value="mRNA"/>
</dbReference>
<dbReference type="RefSeq" id="NP_776998.1">
    <property type="nucleotide sequence ID" value="NM_174573.3"/>
</dbReference>
<dbReference type="SMR" id="Q8SPP7"/>
<dbReference type="FunCoup" id="Q8SPP7">
    <property type="interactions" value="52"/>
</dbReference>
<dbReference type="STRING" id="9913.ENSBTAP00000003414"/>
<dbReference type="PaxDb" id="9913-ENSBTAP00000003414"/>
<dbReference type="PeptideAtlas" id="Q8SPP7"/>
<dbReference type="Ensembl" id="ENSBTAT00000003414.5">
    <property type="protein sequence ID" value="ENSBTAP00000003414.3"/>
    <property type="gene ID" value="ENSBTAG00000002635.5"/>
</dbReference>
<dbReference type="GeneID" id="282305"/>
<dbReference type="KEGG" id="bta:282305"/>
<dbReference type="CTD" id="8993"/>
<dbReference type="VEuPathDB" id="HostDB:ENSBTAG00000002635"/>
<dbReference type="VGNC" id="VGNC:32791">
    <property type="gene designation" value="PGLYRP1"/>
</dbReference>
<dbReference type="eggNOG" id="ENOG502S2KY">
    <property type="taxonomic scope" value="Eukaryota"/>
</dbReference>
<dbReference type="GeneTree" id="ENSGT00940000161006"/>
<dbReference type="HOGENOM" id="CLU_037559_3_2_1"/>
<dbReference type="InParanoid" id="Q8SPP7"/>
<dbReference type="OMA" id="CCSPIVP"/>
<dbReference type="OrthoDB" id="10001926at2759"/>
<dbReference type="TreeFam" id="TF323898"/>
<dbReference type="Reactome" id="R-BTA-6798695">
    <property type="pathway name" value="Neutrophil degranulation"/>
</dbReference>
<dbReference type="Reactome" id="R-BTA-6803157">
    <property type="pathway name" value="Antimicrobial peptides"/>
</dbReference>
<dbReference type="Proteomes" id="UP000009136">
    <property type="component" value="Chromosome 18"/>
</dbReference>
<dbReference type="Bgee" id="ENSBTAG00000002635">
    <property type="expression patterns" value="Expressed in thymus and 82 other cell types or tissues"/>
</dbReference>
<dbReference type="GO" id="GO:0005615">
    <property type="term" value="C:extracellular space"/>
    <property type="evidence" value="ECO:0007669"/>
    <property type="project" value="Ensembl"/>
</dbReference>
<dbReference type="GO" id="GO:0030544">
    <property type="term" value="F:Hsp70 protein binding"/>
    <property type="evidence" value="ECO:0007669"/>
    <property type="project" value="Ensembl"/>
</dbReference>
<dbReference type="GO" id="GO:0060090">
    <property type="term" value="F:molecular adaptor activity"/>
    <property type="evidence" value="ECO:0007669"/>
    <property type="project" value="Ensembl"/>
</dbReference>
<dbReference type="GO" id="GO:0008745">
    <property type="term" value="F:N-acetylmuramoyl-L-alanine amidase activity"/>
    <property type="evidence" value="ECO:0007669"/>
    <property type="project" value="InterPro"/>
</dbReference>
<dbReference type="GO" id="GO:0042834">
    <property type="term" value="F:peptidoglycan binding"/>
    <property type="evidence" value="ECO:0000250"/>
    <property type="project" value="UniProtKB"/>
</dbReference>
<dbReference type="GO" id="GO:0016019">
    <property type="term" value="F:peptidoglycan immune receptor activity"/>
    <property type="evidence" value="ECO:0000318"/>
    <property type="project" value="GO_Central"/>
</dbReference>
<dbReference type="GO" id="GO:0048018">
    <property type="term" value="F:receptor ligand activity"/>
    <property type="evidence" value="ECO:0007669"/>
    <property type="project" value="Ensembl"/>
</dbReference>
<dbReference type="GO" id="GO:0008270">
    <property type="term" value="F:zinc ion binding"/>
    <property type="evidence" value="ECO:0007669"/>
    <property type="project" value="InterPro"/>
</dbReference>
<dbReference type="GO" id="GO:0061844">
    <property type="term" value="P:antimicrobial humoral immune response mediated by antimicrobial peptide"/>
    <property type="evidence" value="ECO:0007669"/>
    <property type="project" value="Ensembl"/>
</dbReference>
<dbReference type="GO" id="GO:0042742">
    <property type="term" value="P:defense response to bacterium"/>
    <property type="evidence" value="ECO:0000318"/>
    <property type="project" value="GO_Central"/>
</dbReference>
<dbReference type="GO" id="GO:0050832">
    <property type="term" value="P:defense response to fungus"/>
    <property type="evidence" value="ECO:0007669"/>
    <property type="project" value="UniProtKB-KW"/>
</dbReference>
<dbReference type="GO" id="GO:0050830">
    <property type="term" value="P:defense response to Gram-positive bacterium"/>
    <property type="evidence" value="ECO:0007669"/>
    <property type="project" value="Ensembl"/>
</dbReference>
<dbReference type="GO" id="GO:0016045">
    <property type="term" value="P:detection of bacterium"/>
    <property type="evidence" value="ECO:0007669"/>
    <property type="project" value="Ensembl"/>
</dbReference>
<dbReference type="GO" id="GO:0006955">
    <property type="term" value="P:immune response"/>
    <property type="evidence" value="ECO:0000318"/>
    <property type="project" value="GO_Central"/>
</dbReference>
<dbReference type="GO" id="GO:0045087">
    <property type="term" value="P:innate immune response"/>
    <property type="evidence" value="ECO:0007669"/>
    <property type="project" value="UniProtKB-KW"/>
</dbReference>
<dbReference type="GO" id="GO:0031640">
    <property type="term" value="P:killing of cells of another organism"/>
    <property type="evidence" value="ECO:0007669"/>
    <property type="project" value="UniProtKB-KW"/>
</dbReference>
<dbReference type="GO" id="GO:0009253">
    <property type="term" value="P:peptidoglycan catabolic process"/>
    <property type="evidence" value="ECO:0007669"/>
    <property type="project" value="InterPro"/>
</dbReference>
<dbReference type="CDD" id="cd06583">
    <property type="entry name" value="PGRP"/>
    <property type="match status" value="1"/>
</dbReference>
<dbReference type="FunFam" id="3.40.80.10:FF:000001">
    <property type="entry name" value="Peptidoglycan recognition protein 1"/>
    <property type="match status" value="1"/>
</dbReference>
<dbReference type="Gene3D" id="3.40.80.10">
    <property type="entry name" value="Peptidoglycan recognition protein-like"/>
    <property type="match status" value="1"/>
</dbReference>
<dbReference type="InterPro" id="IPR036505">
    <property type="entry name" value="Amidase/PGRP_sf"/>
</dbReference>
<dbReference type="InterPro" id="IPR002502">
    <property type="entry name" value="Amidase_domain"/>
</dbReference>
<dbReference type="InterPro" id="IPR017331">
    <property type="entry name" value="Peptidoglycan_recognition"/>
</dbReference>
<dbReference type="InterPro" id="IPR015510">
    <property type="entry name" value="PGRP"/>
</dbReference>
<dbReference type="InterPro" id="IPR006619">
    <property type="entry name" value="PGRP_domain_met/bac"/>
</dbReference>
<dbReference type="PANTHER" id="PTHR11022">
    <property type="entry name" value="PEPTIDOGLYCAN RECOGNITION PROTEIN"/>
    <property type="match status" value="1"/>
</dbReference>
<dbReference type="PANTHER" id="PTHR11022:SF58">
    <property type="entry name" value="PEPTIDOGLYCAN RECOGNITION PROTEIN 1"/>
    <property type="match status" value="1"/>
</dbReference>
<dbReference type="Pfam" id="PF01510">
    <property type="entry name" value="Amidase_2"/>
    <property type="match status" value="1"/>
</dbReference>
<dbReference type="PIRSF" id="PIRSF037945">
    <property type="entry name" value="PGRPs"/>
    <property type="match status" value="1"/>
</dbReference>
<dbReference type="SMART" id="SM00644">
    <property type="entry name" value="Ami_2"/>
    <property type="match status" value="1"/>
</dbReference>
<dbReference type="SMART" id="SM00701">
    <property type="entry name" value="PGRP"/>
    <property type="match status" value="1"/>
</dbReference>
<dbReference type="SUPFAM" id="SSF55846">
    <property type="entry name" value="N-acetylmuramoyl-L-alanine amidase-like"/>
    <property type="match status" value="1"/>
</dbReference>
<proteinExistence type="evidence at protein level"/>
<protein>
    <recommendedName>
        <fullName>Peptidoglycan recognition protein 1</fullName>
    </recommendedName>
    <alternativeName>
        <fullName>Oligosaccharide-binding protein</fullName>
        <shortName>OBP</shortName>
    </alternativeName>
    <alternativeName>
        <fullName>Peptidoglycan recognition protein short</fullName>
        <shortName>PGRP-S</shortName>
    </alternativeName>
</protein>
<evidence type="ECO:0000250" key="1">
    <source>
        <dbReference type="UniProtKB" id="O75594"/>
    </source>
</evidence>
<evidence type="ECO:0000255" key="2"/>
<evidence type="ECO:0000269" key="3">
    <source>
    </source>
</evidence>
<evidence type="ECO:0000269" key="4">
    <source>
    </source>
</evidence>
<evidence type="ECO:0000305" key="5"/>
<organism>
    <name type="scientific">Bos taurus</name>
    <name type="common">Bovine</name>
    <dbReference type="NCBI Taxonomy" id="9913"/>
    <lineage>
        <taxon>Eukaryota</taxon>
        <taxon>Metazoa</taxon>
        <taxon>Chordata</taxon>
        <taxon>Craniata</taxon>
        <taxon>Vertebrata</taxon>
        <taxon>Euteleostomi</taxon>
        <taxon>Mammalia</taxon>
        <taxon>Eutheria</taxon>
        <taxon>Laurasiatheria</taxon>
        <taxon>Artiodactyla</taxon>
        <taxon>Ruminantia</taxon>
        <taxon>Pecora</taxon>
        <taxon>Bovidae</taxon>
        <taxon>Bovinae</taxon>
        <taxon>Bos</taxon>
    </lineage>
</organism>
<accession>Q8SPP7</accession>
<accession>A5PJC0</accession>
<accession>B5T256</accession>
<accession>B5T261</accession>
<keyword id="KW-0044">Antibiotic</keyword>
<keyword id="KW-0929">Antimicrobial</keyword>
<keyword id="KW-0903">Direct protein sequencing</keyword>
<keyword id="KW-1015">Disulfide bond</keyword>
<keyword id="KW-0295">Fungicide</keyword>
<keyword id="KW-0391">Immunity</keyword>
<keyword id="KW-0399">Innate immunity</keyword>
<keyword id="KW-0873">Pyrrolidone carboxylic acid</keyword>
<keyword id="KW-1185">Reference proteome</keyword>
<keyword id="KW-0964">Secreted</keyword>
<keyword id="KW-0732">Signal</keyword>
<gene>
    <name type="primary">PGLYRP1</name>
    <name type="synonym">PGLYRP</name>
    <name type="synonym">PGRP</name>
</gene>
<reference key="1">
    <citation type="journal article" date="2002" name="J. Biol. Chem.">
        <title>Isolation, characterization, and antimicrobial properties of bovine oligosaccharide-binding protein. A microbicidal granule protein of eosinophils and neutrophils.</title>
        <authorList>
            <person name="Tydell C.C."/>
            <person name="Yount N."/>
            <person name="Tran D."/>
            <person name="Yuan J."/>
            <person name="Selsted M.E."/>
        </authorList>
    </citation>
    <scope>NUCLEOTIDE SEQUENCE [MRNA]</scope>
    <scope>PROTEIN SEQUENCE OF 40-43; 50-55; 83-88; 127-145; 141-146 AND 178-190</scope>
    <scope>TISSUE SPECIFICITY</scope>
    <scope>FUNCTION</scope>
    <scope>PYROGLUTAMATE FORMATION AT GLN-22</scope>
    <scope>IDENTIFICATION BY MASS SPECTROMETRY</scope>
</reference>
<reference key="2">
    <citation type="journal article" date="2008" name="Genomics">
        <title>Analysis of sequence variability and protein domain architectures for bovine peptidoglycan recognition protein 1 and Toll-like receptors 2 and 6.</title>
        <authorList>
            <person name="Seabury C.M."/>
            <person name="Womack J.E."/>
        </authorList>
    </citation>
    <scope>NUCLEOTIDE SEQUENCE [GENOMIC DNA]</scope>
    <source>
        <strain>Isolate 44</strain>
        <strain>Isolate 74</strain>
        <strain>Isolate 80</strain>
        <strain>Isolate JEW38</strain>
    </source>
</reference>
<reference key="3">
    <citation type="submission" date="2007-06" db="EMBL/GenBank/DDBJ databases">
        <authorList>
            <consortium name="NIH - Mammalian Gene Collection (MGC) project"/>
        </authorList>
    </citation>
    <scope>NUCLEOTIDE SEQUENCE [LARGE SCALE MRNA]</scope>
    <source>
        <strain>Hereford</strain>
        <tissue>Mammary gland</tissue>
    </source>
</reference>
<reference key="4">
    <citation type="journal article" date="2006" name="J. Immunol.">
        <title>Bovine peptidoglycan recognition protein-S: antimicrobial activity, localization, secretion, and binding properties.</title>
        <authorList>
            <person name="Tydell C.C."/>
            <person name="Yuan J."/>
            <person name="Tran P."/>
            <person name="Selsted M.E."/>
        </authorList>
    </citation>
    <scope>FUNCTION</scope>
    <scope>SUBCELLULAR LOCATION</scope>
</reference>
<sequence length="190" mass="21063">MSRRYTPLAWVLLALLGLGAAQDCGSIVSRGKWGALASKCSQRLRQPVRYVVVSHTAGSVCNTPASCQRQAQNVQYYHVRERGWCDVGYNFLIGEDGLVYEGRGWNTLGAHSGPTWNPIAIGISFMGNYMHRVPPASALRAAQSLLACGAARGYLTPNYEVKGHRDVQQTLSPGDELYKIIQQWPHYRRV</sequence>